<protein>
    <recommendedName>
        <fullName>Lipase</fullName>
        <ecNumber>3.1.1.3</ecNumber>
    </recommendedName>
    <alternativeName>
        <fullName>Triacylglycerol lipase</fullName>
    </alternativeName>
</protein>
<feature type="signal peptide" evidence="2">
    <location>
        <begin position="1"/>
        <end position="23"/>
    </location>
</feature>
<feature type="chain" id="PRO_0000017743" description="Lipase">
    <location>
        <begin position="24"/>
        <end position="476"/>
    </location>
</feature>
<feature type="repeat" description="Hemolysin-type calcium-binding 1">
    <location>
        <begin position="372"/>
        <end position="389"/>
    </location>
</feature>
<feature type="repeat" description="Hemolysin-type calcium-binding 2">
    <location>
        <begin position="390"/>
        <end position="407"/>
    </location>
</feature>
<feature type="repeat" description="Hemolysin-type calcium-binding 3">
    <location>
        <begin position="410"/>
        <end position="427"/>
    </location>
</feature>
<feature type="active site" description="Charge relay system" evidence="3">
    <location>
        <position position="207"/>
    </location>
</feature>
<feature type="binding site" evidence="1">
    <location>
        <position position="437"/>
    </location>
    <ligand>
        <name>Ca(2+)</name>
        <dbReference type="ChEBI" id="CHEBI:29108"/>
    </ligand>
</feature>
<feature type="binding site" evidence="1">
    <location>
        <position position="440"/>
    </location>
    <ligand>
        <name>Ca(2+)</name>
        <dbReference type="ChEBI" id="CHEBI:29108"/>
    </ligand>
</feature>
<feature type="binding site" evidence="1">
    <location>
        <position position="448"/>
    </location>
    <ligand>
        <name>Ca(2+)</name>
        <dbReference type="ChEBI" id="CHEBI:29108"/>
    </ligand>
</feature>
<sequence length="476" mass="50239">MGIFDYKNLGTEGSKTLFADAMAITLYSYHNLDNGFAVGYQHNGLGLGLPATLVGALLGSTDSQGVIPGIPWNPDSEKAALEAVQKAGWTPISASALGYAGKVDARGTFFGEKAGYTTAQVEVLGKYDDAGKLLEIGIGFRGTSGPRETLISDSIGDLISDLLAALGPKDYAKNYAGEAFGGLLKNVADYAGAHGLTGKDVVVSGHSLGGLAVNSMADLSNYKWAGFYKDANYVAYASPTQSAGDKVLNIGYENDPVFRALDGSSFNLSSLGVHDKPHESTTDNIVSFNDHYASTLWNVLPFSIVNLPTWVSHLPTAYGDGMTRILESGFYDQMTRDSTVIVANLSDPARANTWVQDLNRNAEPHKGNTFIIGSDGNDLIQGGNGADFIEGGKGNDTIRDNSGHNTFLFSGHFGNDRVIGYQPTDKLVFKDVQGSTDLRDHAKVVGADTVLTFGADSVTLVGVGHGGLWTEGVVIG</sequence>
<name>LIPB_PSEFL</name>
<organism>
    <name type="scientific">Pseudomonas fluorescens</name>
    <dbReference type="NCBI Taxonomy" id="294"/>
    <lineage>
        <taxon>Bacteria</taxon>
        <taxon>Pseudomonadati</taxon>
        <taxon>Pseudomonadota</taxon>
        <taxon>Gammaproteobacteria</taxon>
        <taxon>Pseudomonadales</taxon>
        <taxon>Pseudomonadaceae</taxon>
        <taxon>Pseudomonas</taxon>
    </lineage>
</organism>
<keyword id="KW-0106">Calcium</keyword>
<keyword id="KW-0378">Hydrolase</keyword>
<keyword id="KW-0442">Lipid degradation</keyword>
<keyword id="KW-0443">Lipid metabolism</keyword>
<keyword id="KW-0479">Metal-binding</keyword>
<keyword id="KW-0677">Repeat</keyword>
<keyword id="KW-0732">Signal</keyword>
<accession>P41773</accession>
<dbReference type="EC" id="3.1.1.3"/>
<dbReference type="EMBL" id="M86350">
    <property type="protein sequence ID" value="AAA25882.1"/>
    <property type="molecule type" value="Genomic_DNA"/>
</dbReference>
<dbReference type="PIR" id="A43942">
    <property type="entry name" value="A43942"/>
</dbReference>
<dbReference type="SMR" id="P41773"/>
<dbReference type="ESTHER" id="psefl-lipb">
    <property type="family name" value="Bacterial_lip_FamI.3"/>
</dbReference>
<dbReference type="eggNOG" id="COG2931">
    <property type="taxonomic scope" value="Bacteria"/>
</dbReference>
<dbReference type="GO" id="GO:0005509">
    <property type="term" value="F:calcium ion binding"/>
    <property type="evidence" value="ECO:0007669"/>
    <property type="project" value="InterPro"/>
</dbReference>
<dbReference type="GO" id="GO:0004806">
    <property type="term" value="F:triacylglycerol lipase activity"/>
    <property type="evidence" value="ECO:0007669"/>
    <property type="project" value="UniProtKB-EC"/>
</dbReference>
<dbReference type="GO" id="GO:0016042">
    <property type="term" value="P:lipid catabolic process"/>
    <property type="evidence" value="ECO:0007669"/>
    <property type="project" value="UniProtKB-KW"/>
</dbReference>
<dbReference type="Gene3D" id="3.40.50.1820">
    <property type="entry name" value="alpha/beta hydrolase"/>
    <property type="match status" value="1"/>
</dbReference>
<dbReference type="Gene3D" id="2.150.10.10">
    <property type="entry name" value="Serralysin-like metalloprotease, C-terminal"/>
    <property type="match status" value="1"/>
</dbReference>
<dbReference type="InterPro" id="IPR029058">
    <property type="entry name" value="AB_hydrolase_fold"/>
</dbReference>
<dbReference type="InterPro" id="IPR018511">
    <property type="entry name" value="Hemolysin-typ_Ca-bd_CS"/>
</dbReference>
<dbReference type="InterPro" id="IPR001343">
    <property type="entry name" value="Hemolysn_Ca-bd"/>
</dbReference>
<dbReference type="InterPro" id="IPR011049">
    <property type="entry name" value="Serralysin-like_metalloprot_C"/>
</dbReference>
<dbReference type="Pfam" id="PF00353">
    <property type="entry name" value="HemolysinCabind"/>
    <property type="match status" value="1"/>
</dbReference>
<dbReference type="PRINTS" id="PR00313">
    <property type="entry name" value="CABNDNGRPT"/>
</dbReference>
<dbReference type="SUPFAM" id="SSF53474">
    <property type="entry name" value="alpha/beta-Hydrolases"/>
    <property type="match status" value="1"/>
</dbReference>
<dbReference type="SUPFAM" id="SSF51120">
    <property type="entry name" value="beta-Roll"/>
    <property type="match status" value="1"/>
</dbReference>
<dbReference type="PROSITE" id="PS00330">
    <property type="entry name" value="HEMOLYSIN_CALCIUM"/>
    <property type="match status" value="1"/>
</dbReference>
<dbReference type="PROSITE" id="PS00120">
    <property type="entry name" value="LIPASE_SER"/>
    <property type="match status" value="1"/>
</dbReference>
<evidence type="ECO:0000250" key="1"/>
<evidence type="ECO:0000255" key="2"/>
<evidence type="ECO:0000255" key="3">
    <source>
        <dbReference type="PROSITE-ProRule" id="PRU10037"/>
    </source>
</evidence>
<evidence type="ECO:0000305" key="4"/>
<reference key="1">
    <citation type="journal article" date="1992" name="Appl. Environ. Microbiol.">
        <title>Cloning, expression, and nucleotide sequence of a lipase gene from Pseudomonas fluorescens B52.</title>
        <authorList>
            <person name="Tan Y."/>
            <person name="Miller K.J."/>
        </authorList>
    </citation>
    <scope>NUCLEOTIDE SEQUENCE [GENOMIC DNA]</scope>
    <source>
        <strain>B52</strain>
    </source>
</reference>
<comment type="catalytic activity">
    <reaction>
        <text>a triacylglycerol + H2O = a diacylglycerol + a fatty acid + H(+)</text>
        <dbReference type="Rhea" id="RHEA:12044"/>
        <dbReference type="ChEBI" id="CHEBI:15377"/>
        <dbReference type="ChEBI" id="CHEBI:15378"/>
        <dbReference type="ChEBI" id="CHEBI:17855"/>
        <dbReference type="ChEBI" id="CHEBI:18035"/>
        <dbReference type="ChEBI" id="CHEBI:28868"/>
        <dbReference type="EC" id="3.1.1.3"/>
    </reaction>
</comment>
<comment type="similarity">
    <text evidence="4">Belongs to the AB hydrolase superfamily. Lipase family.</text>
</comment>
<proteinExistence type="inferred from homology"/>